<comment type="function">
    <text evidence="1">Transcription factor that binds to the E-box and functions as inhibitor of transcription. DNA binding requires dimerization with an E protein. Inhibits transcription activation by ASCL1/MASH1 by sequestering E proteins (By similarity).</text>
</comment>
<comment type="subunit">
    <text evidence="1">Heterodimer with TCF3/E12. Interacts with the bHLH domain of TCF3/E12 (By similarity).</text>
</comment>
<comment type="interaction">
    <interactant intactId="EBI-10183007">
        <id>Q96RJ6</id>
    </interactant>
    <interactant intactId="EBI-10175124">
        <id>Q8IZU0</id>
        <label>FAM9B</label>
    </interactant>
    <organismsDiffer>false</organismsDiffer>
    <experiments>4</experiments>
</comment>
<comment type="interaction">
    <interactant intactId="EBI-10183007">
        <id>Q96RJ6</id>
    </interactant>
    <interactant intactId="EBI-751857">
        <id>O15481</id>
        <label>MAGEB4</label>
    </interactant>
    <organismsDiffer>false</organismsDiffer>
    <experiments>3</experiments>
</comment>
<comment type="interaction">
    <interactant intactId="EBI-10183007">
        <id>Q96RJ6</id>
    </interactant>
    <interactant intactId="EBI-347996">
        <id>O43765</id>
        <label>SGTA</label>
    </interactant>
    <organismsDiffer>false</organismsDiffer>
    <experiments>3</experiments>
</comment>
<comment type="interaction">
    <interactant intactId="EBI-10183007">
        <id>Q96RJ6</id>
    </interactant>
    <interactant intactId="EBI-533224">
        <id>P15884</id>
        <label>TCF4</label>
    </interactant>
    <organismsDiffer>false</organismsDiffer>
    <experiments>5</experiments>
</comment>
<comment type="subcellular location">
    <subcellularLocation>
        <location evidence="2">Nucleus</location>
    </subcellularLocation>
</comment>
<evidence type="ECO:0000250" key="1"/>
<evidence type="ECO:0000255" key="2">
    <source>
        <dbReference type="PROSITE-ProRule" id="PRU00981"/>
    </source>
</evidence>
<evidence type="ECO:0000256" key="3">
    <source>
        <dbReference type="SAM" id="MobiDB-lite"/>
    </source>
</evidence>
<evidence type="ECO:0000269" key="4">
    <source>
    </source>
</evidence>
<evidence type="ECO:0000305" key="5"/>
<organism>
    <name type="scientific">Homo sapiens</name>
    <name type="common">Human</name>
    <dbReference type="NCBI Taxonomy" id="9606"/>
    <lineage>
        <taxon>Eukaryota</taxon>
        <taxon>Metazoa</taxon>
        <taxon>Chordata</taxon>
        <taxon>Craniata</taxon>
        <taxon>Vertebrata</taxon>
        <taxon>Euteleostomi</taxon>
        <taxon>Mammalia</taxon>
        <taxon>Eutheria</taxon>
        <taxon>Euarchontoglires</taxon>
        <taxon>Primates</taxon>
        <taxon>Haplorrhini</taxon>
        <taxon>Catarrhini</taxon>
        <taxon>Hominidae</taxon>
        <taxon>Homo</taxon>
    </lineage>
</organism>
<keyword id="KW-0238">DNA-binding</keyword>
<keyword id="KW-0539">Nucleus</keyword>
<keyword id="KW-1185">Reference proteome</keyword>
<keyword id="KW-0678">Repressor</keyword>
<keyword id="KW-0804">Transcription</keyword>
<keyword id="KW-0805">Transcription regulation</keyword>
<accession>Q96RJ6</accession>
<accession>Q495K0</accession>
<proteinExistence type="evidence at protein level"/>
<reference key="1">
    <citation type="journal article" date="2001" name="Mech. Dev.">
        <title>Nato3 is an evolutionarily conserved bHLH transcription factor expressed in the CNS of Drosophila and mouse.</title>
        <authorList>
            <person name="Segev E."/>
            <person name="Halachmi N."/>
            <person name="Salzberg A."/>
            <person name="Ben-Arie N."/>
        </authorList>
    </citation>
    <scope>NUCLEOTIDE SEQUENCE [GENOMIC DNA]</scope>
</reference>
<reference key="2">
    <citation type="journal article" date="2002" name="Dev. Biol.">
        <title>N-twist, an evolutionarily conserved bHLH protein expressed in the developing CNS, functions as a transcriptional inhibitor.</title>
        <authorList>
            <person name="Verzi M.P."/>
            <person name="Anderson J.P."/>
            <person name="Dodou E."/>
            <person name="Kelly K.K."/>
            <person name="Greene S.B."/>
            <person name="North B.J."/>
            <person name="Cripps R.M."/>
            <person name="Black B.L."/>
        </authorList>
    </citation>
    <scope>NUCLEOTIDE SEQUENCE [MRNA]</scope>
</reference>
<reference key="3">
    <citation type="journal article" date="2003" name="Science">
        <title>Human chromosome 7: DNA sequence and biology.</title>
        <authorList>
            <person name="Scherer S.W."/>
            <person name="Cheung J."/>
            <person name="MacDonald J.R."/>
            <person name="Osborne L.R."/>
            <person name="Nakabayashi K."/>
            <person name="Herbrick J.-A."/>
            <person name="Carson A.R."/>
            <person name="Parker-Katiraee L."/>
            <person name="Skaug J."/>
            <person name="Khaja R."/>
            <person name="Zhang J."/>
            <person name="Hudek A.K."/>
            <person name="Li M."/>
            <person name="Haddad M."/>
            <person name="Duggan G.E."/>
            <person name="Fernandez B.A."/>
            <person name="Kanematsu E."/>
            <person name="Gentles S."/>
            <person name="Christopoulos C.C."/>
            <person name="Choufani S."/>
            <person name="Kwasnicka D."/>
            <person name="Zheng X.H."/>
            <person name="Lai Z."/>
            <person name="Nusskern D.R."/>
            <person name="Zhang Q."/>
            <person name="Gu Z."/>
            <person name="Lu F."/>
            <person name="Zeesman S."/>
            <person name="Nowaczyk M.J."/>
            <person name="Teshima I."/>
            <person name="Chitayat D."/>
            <person name="Shuman C."/>
            <person name="Weksberg R."/>
            <person name="Zackai E.H."/>
            <person name="Grebe T.A."/>
            <person name="Cox S.R."/>
            <person name="Kirkpatrick S.J."/>
            <person name="Rahman N."/>
            <person name="Friedman J.M."/>
            <person name="Heng H.H.Q."/>
            <person name="Pelicci P.G."/>
            <person name="Lo-Coco F."/>
            <person name="Belloni E."/>
            <person name="Shaffer L.G."/>
            <person name="Pober B."/>
            <person name="Morton C.C."/>
            <person name="Gusella J.F."/>
            <person name="Bruns G.A.P."/>
            <person name="Korf B.R."/>
            <person name="Quade B.J."/>
            <person name="Ligon A.H."/>
            <person name="Ferguson H."/>
            <person name="Higgins A.W."/>
            <person name="Leach N.T."/>
            <person name="Herrick S.R."/>
            <person name="Lemyre E."/>
            <person name="Farra C.G."/>
            <person name="Kim H.-G."/>
            <person name="Summers A.M."/>
            <person name="Gripp K.W."/>
            <person name="Roberts W."/>
            <person name="Szatmari P."/>
            <person name="Winsor E.J.T."/>
            <person name="Grzeschik K.-H."/>
            <person name="Teebi A."/>
            <person name="Minassian B.A."/>
            <person name="Kere J."/>
            <person name="Armengol L."/>
            <person name="Pujana M.A."/>
            <person name="Estivill X."/>
            <person name="Wilson M.D."/>
            <person name="Koop B.F."/>
            <person name="Tosi S."/>
            <person name="Moore G.E."/>
            <person name="Boright A.P."/>
            <person name="Zlotorynski E."/>
            <person name="Kerem B."/>
            <person name="Kroisel P.M."/>
            <person name="Petek E."/>
            <person name="Oscier D.G."/>
            <person name="Mould S.J."/>
            <person name="Doehner H."/>
            <person name="Doehner K."/>
            <person name="Rommens J.M."/>
            <person name="Vincent J.B."/>
            <person name="Venter J.C."/>
            <person name="Li P.W."/>
            <person name="Mural R.J."/>
            <person name="Adams M.D."/>
            <person name="Tsui L.-C."/>
        </authorList>
    </citation>
    <scope>NUCLEOTIDE SEQUENCE [LARGE SCALE GENOMIC DNA]</scope>
</reference>
<reference key="4">
    <citation type="submission" date="2005-07" db="EMBL/GenBank/DDBJ databases">
        <authorList>
            <person name="Mural R.J."/>
            <person name="Istrail S."/>
            <person name="Sutton G.G."/>
            <person name="Florea L."/>
            <person name="Halpern A.L."/>
            <person name="Mobarry C.M."/>
            <person name="Lippert R."/>
            <person name="Walenz B."/>
            <person name="Shatkay H."/>
            <person name="Dew I."/>
            <person name="Miller J.R."/>
            <person name="Flanigan M.J."/>
            <person name="Edwards N.J."/>
            <person name="Bolanos R."/>
            <person name="Fasulo D."/>
            <person name="Halldorsson B.V."/>
            <person name="Hannenhalli S."/>
            <person name="Turner R."/>
            <person name="Yooseph S."/>
            <person name="Lu F."/>
            <person name="Nusskern D.R."/>
            <person name="Shue B.C."/>
            <person name="Zheng X.H."/>
            <person name="Zhong F."/>
            <person name="Delcher A.L."/>
            <person name="Huson D.H."/>
            <person name="Kravitz S.A."/>
            <person name="Mouchard L."/>
            <person name="Reinert K."/>
            <person name="Remington K.A."/>
            <person name="Clark A.G."/>
            <person name="Waterman M.S."/>
            <person name="Eichler E.E."/>
            <person name="Adams M.D."/>
            <person name="Hunkapiller M.W."/>
            <person name="Myers E.W."/>
            <person name="Venter J.C."/>
        </authorList>
    </citation>
    <scope>NUCLEOTIDE SEQUENCE [LARGE SCALE GENOMIC DNA]</scope>
</reference>
<reference key="5">
    <citation type="journal article" date="2004" name="Genome Res.">
        <title>The status, quality, and expansion of the NIH full-length cDNA project: the Mammalian Gene Collection (MGC).</title>
        <authorList>
            <consortium name="The MGC Project Team"/>
        </authorList>
    </citation>
    <scope>NUCLEOTIDE SEQUENCE [LARGE SCALE MRNA]</scope>
</reference>
<reference key="6">
    <citation type="journal article" date="2006" name="Science">
        <title>The consensus coding sequences of human breast and colorectal cancers.</title>
        <authorList>
            <person name="Sjoeblom T."/>
            <person name="Jones S."/>
            <person name="Wood L.D."/>
            <person name="Parsons D.W."/>
            <person name="Lin J."/>
            <person name="Barber T.D."/>
            <person name="Mandelker D."/>
            <person name="Leary R.J."/>
            <person name="Ptak J."/>
            <person name="Silliman N."/>
            <person name="Szabo S."/>
            <person name="Buckhaults P."/>
            <person name="Farrell C."/>
            <person name="Meeh P."/>
            <person name="Markowitz S.D."/>
            <person name="Willis J."/>
            <person name="Dawson D."/>
            <person name="Willson J.K.V."/>
            <person name="Gazdar A.F."/>
            <person name="Hartigan J."/>
            <person name="Wu L."/>
            <person name="Liu C."/>
            <person name="Parmigiani G."/>
            <person name="Park B.H."/>
            <person name="Bachman K.E."/>
            <person name="Papadopoulos N."/>
            <person name="Vogelstein B."/>
            <person name="Kinzler K.W."/>
            <person name="Velculescu V.E."/>
        </authorList>
    </citation>
    <scope>VARIANT [LARGE SCALE ANALYSIS] ARG-36</scope>
</reference>
<gene>
    <name type="primary">FERD3L</name>
    <name type="synonym">BHLHA31</name>
    <name type="synonym">NATO3</name>
    <name type="synonym">NTWIST</name>
</gene>
<sequence>MAAYPESCVDTTVLDFVADLSLASPRRPLLCDFAPGVSLGDPALALREGRPRRMARFEEGDPEEEECEVDQGDGEEEEEEERGRGVSLLGRPKRKRVITYAQRQAANIRERKRMFNLNEAFDQLRRKVPTFAYEKRLSRIETLRLAIVYISFMTELLESCEKKESG</sequence>
<name>FER3L_HUMAN</name>
<protein>
    <recommendedName>
        <fullName>Fer3-like protein</fullName>
    </recommendedName>
    <alternativeName>
        <fullName>Basic helix-loop-helix protein N-twist</fullName>
    </alternativeName>
    <alternativeName>
        <fullName>Class A basic helix-loop-helix protein 31</fullName>
        <shortName>bHLHa31</shortName>
    </alternativeName>
    <alternativeName>
        <fullName>Nephew of atonal 3</fullName>
    </alternativeName>
    <alternativeName>
        <fullName>Neuronal twist</fullName>
    </alternativeName>
</protein>
<dbReference type="EMBL" id="AF369897">
    <property type="protein sequence ID" value="AAK72956.1"/>
    <property type="molecule type" value="Genomic_DNA"/>
</dbReference>
<dbReference type="EMBL" id="AF517122">
    <property type="protein sequence ID" value="AAN04086.1"/>
    <property type="molecule type" value="mRNA"/>
</dbReference>
<dbReference type="EMBL" id="CH236948">
    <property type="protein sequence ID" value="EAL24278.1"/>
    <property type="molecule type" value="Genomic_DNA"/>
</dbReference>
<dbReference type="EMBL" id="CH471073">
    <property type="protein sequence ID" value="EAW93712.1"/>
    <property type="molecule type" value="Genomic_DNA"/>
</dbReference>
<dbReference type="EMBL" id="BC069147">
    <property type="protein sequence ID" value="AAH69147.1"/>
    <property type="molecule type" value="mRNA"/>
</dbReference>
<dbReference type="EMBL" id="BC101135">
    <property type="protein sequence ID" value="AAI01136.1"/>
    <property type="molecule type" value="mRNA"/>
</dbReference>
<dbReference type="EMBL" id="BC101136">
    <property type="protein sequence ID" value="AAI01137.1"/>
    <property type="molecule type" value="mRNA"/>
</dbReference>
<dbReference type="EMBL" id="BC101137">
    <property type="protein sequence ID" value="AAI01138.1"/>
    <property type="molecule type" value="mRNA"/>
</dbReference>
<dbReference type="EMBL" id="BC101138">
    <property type="protein sequence ID" value="AAI01139.1"/>
    <property type="molecule type" value="mRNA"/>
</dbReference>
<dbReference type="CCDS" id="CCDS5368.1"/>
<dbReference type="RefSeq" id="NP_690862.1">
    <property type="nucleotide sequence ID" value="NM_152898.2"/>
</dbReference>
<dbReference type="SMR" id="Q96RJ6"/>
<dbReference type="BioGRID" id="128819">
    <property type="interactions" value="16"/>
</dbReference>
<dbReference type="FunCoup" id="Q96RJ6">
    <property type="interactions" value="397"/>
</dbReference>
<dbReference type="IntAct" id="Q96RJ6">
    <property type="interactions" value="11"/>
</dbReference>
<dbReference type="STRING" id="9606.ENSP00000275461"/>
<dbReference type="PhosphoSitePlus" id="Q96RJ6"/>
<dbReference type="BioMuta" id="FERD3L"/>
<dbReference type="DMDM" id="74752106"/>
<dbReference type="jPOST" id="Q96RJ6"/>
<dbReference type="MassIVE" id="Q96RJ6"/>
<dbReference type="PaxDb" id="9606-ENSP00000275461"/>
<dbReference type="PeptideAtlas" id="Q96RJ6"/>
<dbReference type="Antibodypedia" id="11904">
    <property type="antibodies" value="79 antibodies from 19 providers"/>
</dbReference>
<dbReference type="DNASU" id="222894"/>
<dbReference type="Ensembl" id="ENST00000275461.3">
    <property type="protein sequence ID" value="ENSP00000275461.3"/>
    <property type="gene ID" value="ENSG00000146618.3"/>
</dbReference>
<dbReference type="GeneID" id="222894"/>
<dbReference type="KEGG" id="hsa:222894"/>
<dbReference type="MANE-Select" id="ENST00000275461.3">
    <property type="protein sequence ID" value="ENSP00000275461.3"/>
    <property type="RefSeq nucleotide sequence ID" value="NM_152898.2"/>
    <property type="RefSeq protein sequence ID" value="NP_690862.1"/>
</dbReference>
<dbReference type="UCSC" id="uc003suo.1">
    <property type="organism name" value="human"/>
</dbReference>
<dbReference type="AGR" id="HGNC:16660"/>
<dbReference type="CTD" id="222894"/>
<dbReference type="DisGeNET" id="222894"/>
<dbReference type="GeneCards" id="FERD3L"/>
<dbReference type="HGNC" id="HGNC:16660">
    <property type="gene designation" value="FERD3L"/>
</dbReference>
<dbReference type="HPA" id="ENSG00000146618">
    <property type="expression patterns" value="Not detected"/>
</dbReference>
<dbReference type="MIM" id="617578">
    <property type="type" value="gene"/>
</dbReference>
<dbReference type="neXtProt" id="NX_Q96RJ6"/>
<dbReference type="OpenTargets" id="ENSG00000146618"/>
<dbReference type="PharmGKB" id="PA134973730"/>
<dbReference type="VEuPathDB" id="HostDB:ENSG00000146618"/>
<dbReference type="eggNOG" id="KOG4029">
    <property type="taxonomic scope" value="Eukaryota"/>
</dbReference>
<dbReference type="GeneTree" id="ENSGT00940000161409"/>
<dbReference type="HOGENOM" id="CLU_148882_0_0_1"/>
<dbReference type="InParanoid" id="Q96RJ6"/>
<dbReference type="OMA" id="LDGCSRQ"/>
<dbReference type="OrthoDB" id="6125763at2759"/>
<dbReference type="PAN-GO" id="Q96RJ6">
    <property type="GO annotations" value="4 GO annotations based on evolutionary models"/>
</dbReference>
<dbReference type="PhylomeDB" id="Q96RJ6"/>
<dbReference type="PathwayCommons" id="Q96RJ6"/>
<dbReference type="SignaLink" id="Q96RJ6"/>
<dbReference type="BioGRID-ORCS" id="222894">
    <property type="hits" value="10 hits in 1159 CRISPR screens"/>
</dbReference>
<dbReference type="GenomeRNAi" id="222894"/>
<dbReference type="Pharos" id="Q96RJ6">
    <property type="development level" value="Tbio"/>
</dbReference>
<dbReference type="PRO" id="PR:Q96RJ6"/>
<dbReference type="Proteomes" id="UP000005640">
    <property type="component" value="Chromosome 7"/>
</dbReference>
<dbReference type="RNAct" id="Q96RJ6">
    <property type="molecule type" value="protein"/>
</dbReference>
<dbReference type="Bgee" id="ENSG00000146618">
    <property type="expression patterns" value="Expressed in sural nerve and 23 other cell types or tissues"/>
</dbReference>
<dbReference type="GO" id="GO:0000785">
    <property type="term" value="C:chromatin"/>
    <property type="evidence" value="ECO:0000247"/>
    <property type="project" value="NTNU_SB"/>
</dbReference>
<dbReference type="GO" id="GO:0005634">
    <property type="term" value="C:nucleus"/>
    <property type="evidence" value="ECO:0000250"/>
    <property type="project" value="UniProtKB"/>
</dbReference>
<dbReference type="GO" id="GO:0000981">
    <property type="term" value="F:DNA-binding transcription factor activity, RNA polymerase II-specific"/>
    <property type="evidence" value="ECO:0000247"/>
    <property type="project" value="NTNU_SB"/>
</dbReference>
<dbReference type="GO" id="GO:0001227">
    <property type="term" value="F:DNA-binding transcription repressor activity, RNA polymerase II-specific"/>
    <property type="evidence" value="ECO:0007669"/>
    <property type="project" value="Ensembl"/>
</dbReference>
<dbReference type="GO" id="GO:0046983">
    <property type="term" value="F:protein dimerization activity"/>
    <property type="evidence" value="ECO:0007669"/>
    <property type="project" value="InterPro"/>
</dbReference>
<dbReference type="GO" id="GO:0000977">
    <property type="term" value="F:RNA polymerase II transcription regulatory region sequence-specific DNA binding"/>
    <property type="evidence" value="ECO:0000318"/>
    <property type="project" value="GO_Central"/>
</dbReference>
<dbReference type="GO" id="GO:1990837">
    <property type="term" value="F:sequence-specific double-stranded DNA binding"/>
    <property type="evidence" value="ECO:0000314"/>
    <property type="project" value="ARUK-UCL"/>
</dbReference>
<dbReference type="GO" id="GO:0048468">
    <property type="term" value="P:cell development"/>
    <property type="evidence" value="ECO:0007669"/>
    <property type="project" value="Ensembl"/>
</dbReference>
<dbReference type="GO" id="GO:0032502">
    <property type="term" value="P:developmental process"/>
    <property type="evidence" value="ECO:0000318"/>
    <property type="project" value="GO_Central"/>
</dbReference>
<dbReference type="GO" id="GO:0033504">
    <property type="term" value="P:floor plate development"/>
    <property type="evidence" value="ECO:0007669"/>
    <property type="project" value="Ensembl"/>
</dbReference>
<dbReference type="GO" id="GO:0045892">
    <property type="term" value="P:negative regulation of DNA-templated transcription"/>
    <property type="evidence" value="ECO:0000250"/>
    <property type="project" value="UniProtKB"/>
</dbReference>
<dbReference type="GO" id="GO:1904338">
    <property type="term" value="P:regulation of dopaminergic neuron differentiation"/>
    <property type="evidence" value="ECO:0007669"/>
    <property type="project" value="Ensembl"/>
</dbReference>
<dbReference type="GO" id="GO:0050767">
    <property type="term" value="P:regulation of neurogenesis"/>
    <property type="evidence" value="ECO:0007669"/>
    <property type="project" value="Ensembl"/>
</dbReference>
<dbReference type="GO" id="GO:0006357">
    <property type="term" value="P:regulation of transcription by RNA polymerase II"/>
    <property type="evidence" value="ECO:0000318"/>
    <property type="project" value="GO_Central"/>
</dbReference>
<dbReference type="CDD" id="cd11415">
    <property type="entry name" value="bHLH_TS_FERD3L_NATO3"/>
    <property type="match status" value="1"/>
</dbReference>
<dbReference type="FunFam" id="4.10.280.10:FF:000035">
    <property type="entry name" value="Pancreas-specific transcription factor 1a"/>
    <property type="match status" value="1"/>
</dbReference>
<dbReference type="Gene3D" id="4.10.280.10">
    <property type="entry name" value="Helix-loop-helix DNA-binding domain"/>
    <property type="match status" value="1"/>
</dbReference>
<dbReference type="InterPro" id="IPR011598">
    <property type="entry name" value="bHLH_dom"/>
</dbReference>
<dbReference type="InterPro" id="IPR050283">
    <property type="entry name" value="E-box_TF_Regulators"/>
</dbReference>
<dbReference type="InterPro" id="IPR036638">
    <property type="entry name" value="HLH_DNA-bd_sf"/>
</dbReference>
<dbReference type="PANTHER" id="PTHR23349">
    <property type="entry name" value="BASIC HELIX-LOOP-HELIX TRANSCRIPTION FACTOR, TWIST"/>
    <property type="match status" value="1"/>
</dbReference>
<dbReference type="PANTHER" id="PTHR23349:SF63">
    <property type="entry name" value="FER3-LIKE PROTEIN"/>
    <property type="match status" value="1"/>
</dbReference>
<dbReference type="Pfam" id="PF00010">
    <property type="entry name" value="HLH"/>
    <property type="match status" value="1"/>
</dbReference>
<dbReference type="SMART" id="SM00353">
    <property type="entry name" value="HLH"/>
    <property type="match status" value="1"/>
</dbReference>
<dbReference type="SUPFAM" id="SSF47459">
    <property type="entry name" value="HLH, helix-loop-helix DNA-binding domain"/>
    <property type="match status" value="1"/>
</dbReference>
<dbReference type="PROSITE" id="PS50888">
    <property type="entry name" value="BHLH"/>
    <property type="match status" value="1"/>
</dbReference>
<feature type="chain" id="PRO_0000328682" description="Fer3-like protein">
    <location>
        <begin position="1"/>
        <end position="166"/>
    </location>
</feature>
<feature type="domain" description="bHLH" evidence="2">
    <location>
        <begin position="101"/>
        <end position="153"/>
    </location>
</feature>
<feature type="region of interest" description="Disordered" evidence="3">
    <location>
        <begin position="57"/>
        <end position="88"/>
    </location>
</feature>
<feature type="compositionally biased region" description="Acidic residues" evidence="3">
    <location>
        <begin position="60"/>
        <end position="80"/>
    </location>
</feature>
<feature type="sequence variant" id="VAR_042439" description="In a colorectal cancer sample; somatic mutation; dbSNP:rs775679607." evidence="4">
    <original>G</original>
    <variation>R</variation>
    <location>
        <position position="36"/>
    </location>
</feature>
<feature type="sequence conflict" description="In Ref. 5; AAI01136/AAI01137." evidence="5" ref="5">
    <original>G</original>
    <variation>GE</variation>
    <location>
        <position position="74"/>
    </location>
</feature>